<feature type="chain" id="PRO_0000405566" description="Metal transporter Nramp1">
    <location>
        <begin position="1"/>
        <end position="518"/>
    </location>
</feature>
<feature type="transmembrane region" description="Helical" evidence="1">
    <location>
        <begin position="35"/>
        <end position="55"/>
    </location>
</feature>
<feature type="transmembrane region" description="Helical" evidence="1">
    <location>
        <begin position="68"/>
        <end position="88"/>
    </location>
</feature>
<feature type="transmembrane region" description="Helical" evidence="1">
    <location>
        <begin position="107"/>
        <end position="127"/>
    </location>
</feature>
<feature type="transmembrane region" description="Helical" evidence="1">
    <location>
        <begin position="131"/>
        <end position="151"/>
    </location>
</feature>
<feature type="transmembrane region" description="Helical" evidence="1">
    <location>
        <begin position="172"/>
        <end position="192"/>
    </location>
</feature>
<feature type="transmembrane region" description="Helical" evidence="1">
    <location>
        <begin position="218"/>
        <end position="238"/>
    </location>
</feature>
<feature type="transmembrane region" description="Helical" evidence="1">
    <location>
        <begin position="255"/>
        <end position="275"/>
    </location>
</feature>
<feature type="transmembrane region" description="Helical" evidence="1">
    <location>
        <begin position="315"/>
        <end position="337"/>
    </location>
</feature>
<feature type="transmembrane region" description="Helical" evidence="1">
    <location>
        <begin position="357"/>
        <end position="377"/>
    </location>
</feature>
<feature type="transmembrane region" description="Helical" evidence="1">
    <location>
        <begin position="382"/>
        <end position="402"/>
    </location>
</feature>
<feature type="transmembrane region" description="Helical" evidence="1">
    <location>
        <begin position="418"/>
        <end position="438"/>
    </location>
</feature>
<feature type="transmembrane region" description="Helical" evidence="1">
    <location>
        <begin position="458"/>
        <end position="478"/>
    </location>
</feature>
<feature type="sequence conflict" description="In Ref. 1; ABD85292." evidence="3" ref="1">
    <original>F</original>
    <variation>S</variation>
    <location>
        <position position="79"/>
    </location>
</feature>
<feature type="sequence conflict" description="In Ref. 1; ABD85292." evidence="3" ref="1">
    <original>Q</original>
    <variation>R</variation>
    <location>
        <position position="163"/>
    </location>
</feature>
<feature type="sequence conflict" description="In Ref. 1; ABD85292." evidence="3" ref="1">
    <original>M</original>
    <variation>I</variation>
    <location>
        <position position="411"/>
    </location>
</feature>
<evidence type="ECO:0000255" key="1"/>
<evidence type="ECO:0000269" key="2">
    <source>
    </source>
</evidence>
<evidence type="ECO:0000305" key="3"/>
<name>NRAM1_ORYSJ</name>
<gene>
    <name type="primary">NRAMP1</name>
    <name type="ordered locus">Os07g0258400</name>
    <name type="ordered locus">LOC_Os07g15460</name>
    <name type="ORF">OJ1354_H07.109</name>
    <name type="ORF">OsJ_23752</name>
</gene>
<comment type="function">
    <text evidence="2">Probable metal transporter that may participate in the control of iron homeostasis.</text>
</comment>
<comment type="subcellular location">
    <subcellularLocation>
        <location evidence="3">Membrane</location>
        <topology evidence="3">Multi-pass membrane protein</topology>
    </subcellularLocation>
</comment>
<comment type="similarity">
    <text evidence="3">Belongs to the NRAMP (TC 2.A.55) family.</text>
</comment>
<comment type="sequence caution" evidence="3">
    <conflict type="erroneous gene model prediction">
        <sequence resource="EMBL-CDS" id="BAC83021"/>
    </conflict>
</comment>
<proteinExistence type="evidence at transcript level"/>
<sequence length="518" mass="55814">MGVTKAEAVAGDGGKVVDDIEALADLRKEPAWKRFLSHIGPGFMVCLAYLDPGNMETDLQAGANHKYELLWVILIGLIFALIIQSLSANLGVVTGRHLAELCKTEYPVWVKTCLWLLAELAVIASDIPEVIGTGFAFNLLFHIPVWTGVLIAGSSTLLLLGLQRYGVRKLEVVVALLVFVMAGCFFVEMSIVKPPVNEVLQGLFIPRLSGPGATGDSIALLGALVMPHNLFLHSALVLSRNTPASAKGMKDVCRFFLFESGIALFVALLVNIAIISVSGTVCNATNLSPEDAVKCSDLTLDSSSFLLRNVLGKSSATVYGVALLASGQSSTITGTYAGQYVMQGFLDIKMKQWLRNLMTRSIAIVPSLIVSIIGGSSGAGRLIVIASMILSFELPFALIPLLKFSSSSNKMGENKNSIYIVGFSWVLGFVIIGINIYFLSTKLVGWILHNALPTFANVLIGIVLFPLMLLYVVAVIYLTFRKDTVKFVSRRELQAGDDTEKAQVATCVADEHSKEPPV</sequence>
<accession>Q0D7E4</accession>
<accession>A0A0P0X4X3</accession>
<accession>Q1W6C2</accession>
<accession>Q8GTY9</accession>
<organism>
    <name type="scientific">Oryza sativa subsp. japonica</name>
    <name type="common">Rice</name>
    <dbReference type="NCBI Taxonomy" id="39947"/>
    <lineage>
        <taxon>Eukaryota</taxon>
        <taxon>Viridiplantae</taxon>
        <taxon>Streptophyta</taxon>
        <taxon>Embryophyta</taxon>
        <taxon>Tracheophyta</taxon>
        <taxon>Spermatophyta</taxon>
        <taxon>Magnoliopsida</taxon>
        <taxon>Liliopsida</taxon>
        <taxon>Poales</taxon>
        <taxon>Poaceae</taxon>
        <taxon>BOP clade</taxon>
        <taxon>Oryzoideae</taxon>
        <taxon>Oryzeae</taxon>
        <taxon>Oryzinae</taxon>
        <taxon>Oryza</taxon>
        <taxon>Oryza sativa</taxon>
    </lineage>
</organism>
<reference key="1">
    <citation type="submission" date="2006-03" db="EMBL/GenBank/DDBJ databases">
        <title>Cloning and cellular location in cells of OsNramp1.</title>
        <authorList>
            <person name="Hao X."/>
            <person name="Huang Q.N."/>
            <person name="Yin L.-P."/>
        </authorList>
    </citation>
    <scope>NUCLEOTIDE SEQUENCE [MRNA]</scope>
    <source>
        <strain>cv. Jingdao 21</strain>
        <tissue>Root</tissue>
    </source>
</reference>
<reference key="2">
    <citation type="journal article" date="2005" name="Nature">
        <title>The map-based sequence of the rice genome.</title>
        <authorList>
            <consortium name="International rice genome sequencing project (IRGSP)"/>
        </authorList>
    </citation>
    <scope>NUCLEOTIDE SEQUENCE [LARGE SCALE GENOMIC DNA]</scope>
    <source>
        <strain>cv. Nipponbare</strain>
    </source>
</reference>
<reference key="3">
    <citation type="journal article" date="2008" name="Nucleic Acids Res.">
        <title>The rice annotation project database (RAP-DB): 2008 update.</title>
        <authorList>
            <consortium name="The rice annotation project (RAP)"/>
        </authorList>
    </citation>
    <scope>GENOME REANNOTATION</scope>
    <source>
        <strain>cv. Nipponbare</strain>
    </source>
</reference>
<reference key="4">
    <citation type="journal article" date="2013" name="Rice">
        <title>Improvement of the Oryza sativa Nipponbare reference genome using next generation sequence and optical map data.</title>
        <authorList>
            <person name="Kawahara Y."/>
            <person name="de la Bastide M."/>
            <person name="Hamilton J.P."/>
            <person name="Kanamori H."/>
            <person name="McCombie W.R."/>
            <person name="Ouyang S."/>
            <person name="Schwartz D.C."/>
            <person name="Tanaka T."/>
            <person name="Wu J."/>
            <person name="Zhou S."/>
            <person name="Childs K.L."/>
            <person name="Davidson R.M."/>
            <person name="Lin H."/>
            <person name="Quesada-Ocampo L."/>
            <person name="Vaillancourt B."/>
            <person name="Sakai H."/>
            <person name="Lee S.S."/>
            <person name="Kim J."/>
            <person name="Numa H."/>
            <person name="Itoh T."/>
            <person name="Buell C.R."/>
            <person name="Matsumoto T."/>
        </authorList>
    </citation>
    <scope>GENOME REANNOTATION</scope>
    <source>
        <strain>cv. Nipponbare</strain>
    </source>
</reference>
<reference key="5">
    <citation type="journal article" date="2005" name="PLoS Biol.">
        <title>The genomes of Oryza sativa: a history of duplications.</title>
        <authorList>
            <person name="Yu J."/>
            <person name="Wang J."/>
            <person name="Lin W."/>
            <person name="Li S."/>
            <person name="Li H."/>
            <person name="Zhou J."/>
            <person name="Ni P."/>
            <person name="Dong W."/>
            <person name="Hu S."/>
            <person name="Zeng C."/>
            <person name="Zhang J."/>
            <person name="Zhang Y."/>
            <person name="Li R."/>
            <person name="Xu Z."/>
            <person name="Li S."/>
            <person name="Li X."/>
            <person name="Zheng H."/>
            <person name="Cong L."/>
            <person name="Lin L."/>
            <person name="Yin J."/>
            <person name="Geng J."/>
            <person name="Li G."/>
            <person name="Shi J."/>
            <person name="Liu J."/>
            <person name="Lv H."/>
            <person name="Li J."/>
            <person name="Wang J."/>
            <person name="Deng Y."/>
            <person name="Ran L."/>
            <person name="Shi X."/>
            <person name="Wang X."/>
            <person name="Wu Q."/>
            <person name="Li C."/>
            <person name="Ren X."/>
            <person name="Wang J."/>
            <person name="Wang X."/>
            <person name="Li D."/>
            <person name="Liu D."/>
            <person name="Zhang X."/>
            <person name="Ji Z."/>
            <person name="Zhao W."/>
            <person name="Sun Y."/>
            <person name="Zhang Z."/>
            <person name="Bao J."/>
            <person name="Han Y."/>
            <person name="Dong L."/>
            <person name="Ji J."/>
            <person name="Chen P."/>
            <person name="Wu S."/>
            <person name="Liu J."/>
            <person name="Xiao Y."/>
            <person name="Bu D."/>
            <person name="Tan J."/>
            <person name="Yang L."/>
            <person name="Ye C."/>
            <person name="Zhang J."/>
            <person name="Xu J."/>
            <person name="Zhou Y."/>
            <person name="Yu Y."/>
            <person name="Zhang B."/>
            <person name="Zhuang S."/>
            <person name="Wei H."/>
            <person name="Liu B."/>
            <person name="Lei M."/>
            <person name="Yu H."/>
            <person name="Li Y."/>
            <person name="Xu H."/>
            <person name="Wei S."/>
            <person name="He X."/>
            <person name="Fang L."/>
            <person name="Zhang Z."/>
            <person name="Zhang Y."/>
            <person name="Huang X."/>
            <person name="Su Z."/>
            <person name="Tong W."/>
            <person name="Li J."/>
            <person name="Tong Z."/>
            <person name="Li S."/>
            <person name="Ye J."/>
            <person name="Wang L."/>
            <person name="Fang L."/>
            <person name="Lei T."/>
            <person name="Chen C.-S."/>
            <person name="Chen H.-C."/>
            <person name="Xu Z."/>
            <person name="Li H."/>
            <person name="Huang H."/>
            <person name="Zhang F."/>
            <person name="Xu H."/>
            <person name="Li N."/>
            <person name="Zhao C."/>
            <person name="Li S."/>
            <person name="Dong L."/>
            <person name="Huang Y."/>
            <person name="Li L."/>
            <person name="Xi Y."/>
            <person name="Qi Q."/>
            <person name="Li W."/>
            <person name="Zhang B."/>
            <person name="Hu W."/>
            <person name="Zhang Y."/>
            <person name="Tian X."/>
            <person name="Jiao Y."/>
            <person name="Liang X."/>
            <person name="Jin J."/>
            <person name="Gao L."/>
            <person name="Zheng W."/>
            <person name="Hao B."/>
            <person name="Liu S.-M."/>
            <person name="Wang W."/>
            <person name="Yuan L."/>
            <person name="Cao M."/>
            <person name="McDermott J."/>
            <person name="Samudrala R."/>
            <person name="Wang J."/>
            <person name="Wong G.K.-S."/>
            <person name="Yang H."/>
        </authorList>
    </citation>
    <scope>NUCLEOTIDE SEQUENCE [LARGE SCALE GENOMIC DNA]</scope>
    <source>
        <strain>cv. Nipponbare</strain>
    </source>
</reference>
<reference key="6">
    <citation type="journal article" date="2000" name="Biochem. J.">
        <title>Involvement of NRAMP1 from Arabidopsis thaliana in iron transport.</title>
        <authorList>
            <person name="Curie C."/>
            <person name="Alonso J.M."/>
            <person name="Le Jean M."/>
            <person name="Ecker J.R."/>
            <person name="Briat J.-F."/>
        </authorList>
    </citation>
    <scope>FUNCTION</scope>
</reference>
<protein>
    <recommendedName>
        <fullName>Metal transporter Nramp1</fullName>
        <shortName>OsNramp1</shortName>
    </recommendedName>
</protein>
<keyword id="KW-0406">Ion transport</keyword>
<keyword id="KW-0408">Iron</keyword>
<keyword id="KW-0410">Iron transport</keyword>
<keyword id="KW-0472">Membrane</keyword>
<keyword id="KW-1185">Reference proteome</keyword>
<keyword id="KW-0812">Transmembrane</keyword>
<keyword id="KW-1133">Transmembrane helix</keyword>
<keyword id="KW-0813">Transport</keyword>
<dbReference type="EMBL" id="DQ431468">
    <property type="protein sequence ID" value="ABD85292.1"/>
    <property type="molecule type" value="mRNA"/>
</dbReference>
<dbReference type="EMBL" id="AP003755">
    <property type="protein sequence ID" value="BAC83021.1"/>
    <property type="status" value="ALT_SEQ"/>
    <property type="molecule type" value="Genomic_DNA"/>
</dbReference>
<dbReference type="EMBL" id="AP008213">
    <property type="protein sequence ID" value="BAF21229.1"/>
    <property type="molecule type" value="Genomic_DNA"/>
</dbReference>
<dbReference type="EMBL" id="AP014963">
    <property type="protein sequence ID" value="BAT00879.1"/>
    <property type="molecule type" value="Genomic_DNA"/>
</dbReference>
<dbReference type="EMBL" id="CM000144">
    <property type="protein sequence ID" value="EEE66907.1"/>
    <property type="molecule type" value="Genomic_DNA"/>
</dbReference>
<dbReference type="RefSeq" id="XP_015647629.1">
    <property type="nucleotide sequence ID" value="XM_015792143.1"/>
</dbReference>
<dbReference type="SMR" id="Q0D7E4"/>
<dbReference type="FunCoup" id="Q0D7E4">
    <property type="interactions" value="5"/>
</dbReference>
<dbReference type="STRING" id="39947.Q0D7E4"/>
<dbReference type="PaxDb" id="39947-Q0D7E4"/>
<dbReference type="EnsemblPlants" id="Os07t0258400-01">
    <property type="protein sequence ID" value="Os07t0258400-01"/>
    <property type="gene ID" value="Os07g0258400"/>
</dbReference>
<dbReference type="EnsemblPlants" id="Os07t0258400-03">
    <property type="protein sequence ID" value="Os07t0258400-03"/>
    <property type="gene ID" value="Os07g0258400"/>
</dbReference>
<dbReference type="Gramene" id="Os07t0258400-01">
    <property type="protein sequence ID" value="Os07t0258400-01"/>
    <property type="gene ID" value="Os07g0258400"/>
</dbReference>
<dbReference type="Gramene" id="Os07t0258400-03">
    <property type="protein sequence ID" value="Os07t0258400-03"/>
    <property type="gene ID" value="Os07g0258400"/>
</dbReference>
<dbReference type="KEGG" id="dosa:Os07g0258400"/>
<dbReference type="eggNOG" id="KOG1291">
    <property type="taxonomic scope" value="Eukaryota"/>
</dbReference>
<dbReference type="InParanoid" id="Q0D7E4"/>
<dbReference type="OMA" id="GMKDACR"/>
<dbReference type="OrthoDB" id="409173at2759"/>
<dbReference type="PlantReactome" id="R-OSA-9025727">
    <property type="pathway name" value="Iron uptake and transport in root vascular system"/>
</dbReference>
<dbReference type="PlantReactome" id="R-OSA-9618218">
    <property type="pathway name" value="Arsenic uptake and detoxification"/>
</dbReference>
<dbReference type="Proteomes" id="UP000000763">
    <property type="component" value="Chromosome 7"/>
</dbReference>
<dbReference type="Proteomes" id="UP000007752">
    <property type="component" value="Chromosome 7"/>
</dbReference>
<dbReference type="Proteomes" id="UP000059680">
    <property type="component" value="Chromosome 7"/>
</dbReference>
<dbReference type="ExpressionAtlas" id="Q0D7E4">
    <property type="expression patterns" value="baseline and differential"/>
</dbReference>
<dbReference type="GO" id="GO:0005886">
    <property type="term" value="C:plasma membrane"/>
    <property type="evidence" value="ECO:0000318"/>
    <property type="project" value="GO_Central"/>
</dbReference>
<dbReference type="GO" id="GO:0015086">
    <property type="term" value="F:cadmium ion transmembrane transporter activity"/>
    <property type="evidence" value="ECO:0000318"/>
    <property type="project" value="GO_Central"/>
</dbReference>
<dbReference type="GO" id="GO:0005381">
    <property type="term" value="F:iron ion transmembrane transporter activity"/>
    <property type="evidence" value="ECO:0000314"/>
    <property type="project" value="UniProtKB"/>
</dbReference>
<dbReference type="GO" id="GO:0005384">
    <property type="term" value="F:manganese ion transmembrane transporter activity"/>
    <property type="evidence" value="ECO:0000318"/>
    <property type="project" value="GO_Central"/>
</dbReference>
<dbReference type="GO" id="GO:0034755">
    <property type="term" value="P:iron ion transmembrane transport"/>
    <property type="evidence" value="ECO:0000314"/>
    <property type="project" value="UniProtKB"/>
</dbReference>
<dbReference type="GO" id="GO:0006828">
    <property type="term" value="P:manganese ion transport"/>
    <property type="evidence" value="ECO:0000318"/>
    <property type="project" value="GO_Central"/>
</dbReference>
<dbReference type="HAMAP" id="MF_00221">
    <property type="entry name" value="NRAMP"/>
    <property type="match status" value="1"/>
</dbReference>
<dbReference type="InterPro" id="IPR001046">
    <property type="entry name" value="NRAMP_fam"/>
</dbReference>
<dbReference type="NCBIfam" id="TIGR01197">
    <property type="entry name" value="nramp"/>
    <property type="match status" value="1"/>
</dbReference>
<dbReference type="NCBIfam" id="NF037982">
    <property type="entry name" value="Nramp_1"/>
    <property type="match status" value="1"/>
</dbReference>
<dbReference type="NCBIfam" id="NF001923">
    <property type="entry name" value="PRK00701.1"/>
    <property type="match status" value="1"/>
</dbReference>
<dbReference type="PANTHER" id="PTHR11706:SF41">
    <property type="entry name" value="METAL TRANSPORTER NRAMP1"/>
    <property type="match status" value="1"/>
</dbReference>
<dbReference type="PANTHER" id="PTHR11706">
    <property type="entry name" value="SOLUTE CARRIER PROTEIN FAMILY 11 MEMBER"/>
    <property type="match status" value="1"/>
</dbReference>
<dbReference type="Pfam" id="PF01566">
    <property type="entry name" value="Nramp"/>
    <property type="match status" value="1"/>
</dbReference>
<dbReference type="PRINTS" id="PR00447">
    <property type="entry name" value="NATRESASSCMP"/>
</dbReference>